<accession>B4T705</accession>
<reference key="1">
    <citation type="journal article" date="2011" name="J. Bacteriol.">
        <title>Comparative genomics of 28 Salmonella enterica isolates: evidence for CRISPR-mediated adaptive sublineage evolution.</title>
        <authorList>
            <person name="Fricke W.F."/>
            <person name="Mammel M.K."/>
            <person name="McDermott P.F."/>
            <person name="Tartera C."/>
            <person name="White D.G."/>
            <person name="Leclerc J.E."/>
            <person name="Ravel J."/>
            <person name="Cebula T.A."/>
        </authorList>
    </citation>
    <scope>NUCLEOTIDE SEQUENCE [LARGE SCALE GENOMIC DNA]</scope>
    <source>
        <strain>SL254</strain>
    </source>
</reference>
<feature type="chain" id="PRO_1000201138" description="Phosphoglucosamine mutase">
    <location>
        <begin position="1"/>
        <end position="445"/>
    </location>
</feature>
<feature type="active site" description="Phosphoserine intermediate" evidence="1">
    <location>
        <position position="102"/>
    </location>
</feature>
<feature type="binding site" description="via phosphate group" evidence="1">
    <location>
        <position position="102"/>
    </location>
    <ligand>
        <name>Mg(2+)</name>
        <dbReference type="ChEBI" id="CHEBI:18420"/>
    </ligand>
</feature>
<feature type="binding site" evidence="1">
    <location>
        <position position="241"/>
    </location>
    <ligand>
        <name>Mg(2+)</name>
        <dbReference type="ChEBI" id="CHEBI:18420"/>
    </ligand>
</feature>
<feature type="binding site" evidence="1">
    <location>
        <position position="243"/>
    </location>
    <ligand>
        <name>Mg(2+)</name>
        <dbReference type="ChEBI" id="CHEBI:18420"/>
    </ligand>
</feature>
<feature type="binding site" evidence="1">
    <location>
        <position position="245"/>
    </location>
    <ligand>
        <name>Mg(2+)</name>
        <dbReference type="ChEBI" id="CHEBI:18420"/>
    </ligand>
</feature>
<feature type="modified residue" description="Phosphoserine" evidence="1">
    <location>
        <position position="102"/>
    </location>
</feature>
<protein>
    <recommendedName>
        <fullName evidence="1">Phosphoglucosamine mutase</fullName>
        <ecNumber evidence="1">5.4.2.10</ecNumber>
    </recommendedName>
</protein>
<organism>
    <name type="scientific">Salmonella newport (strain SL254)</name>
    <dbReference type="NCBI Taxonomy" id="423368"/>
    <lineage>
        <taxon>Bacteria</taxon>
        <taxon>Pseudomonadati</taxon>
        <taxon>Pseudomonadota</taxon>
        <taxon>Gammaproteobacteria</taxon>
        <taxon>Enterobacterales</taxon>
        <taxon>Enterobacteriaceae</taxon>
        <taxon>Salmonella</taxon>
    </lineage>
</organism>
<comment type="function">
    <text evidence="1">Catalyzes the conversion of glucosamine-6-phosphate to glucosamine-1-phosphate.</text>
</comment>
<comment type="catalytic activity">
    <reaction evidence="1">
        <text>alpha-D-glucosamine 1-phosphate = D-glucosamine 6-phosphate</text>
        <dbReference type="Rhea" id="RHEA:23424"/>
        <dbReference type="ChEBI" id="CHEBI:58516"/>
        <dbReference type="ChEBI" id="CHEBI:58725"/>
        <dbReference type="EC" id="5.4.2.10"/>
    </reaction>
</comment>
<comment type="cofactor">
    <cofactor evidence="1">
        <name>Mg(2+)</name>
        <dbReference type="ChEBI" id="CHEBI:18420"/>
    </cofactor>
    <text evidence="1">Binds 1 Mg(2+) ion per subunit.</text>
</comment>
<comment type="PTM">
    <text evidence="1">Activated by phosphorylation.</text>
</comment>
<comment type="similarity">
    <text evidence="1">Belongs to the phosphohexose mutase family.</text>
</comment>
<dbReference type="EC" id="5.4.2.10" evidence="1"/>
<dbReference type="EMBL" id="CP001113">
    <property type="protein sequence ID" value="ACF63674.1"/>
    <property type="molecule type" value="Genomic_DNA"/>
</dbReference>
<dbReference type="RefSeq" id="WP_000071169.1">
    <property type="nucleotide sequence ID" value="NZ_CCMR01000001.1"/>
</dbReference>
<dbReference type="SMR" id="B4T705"/>
<dbReference type="KEGG" id="see:SNSL254_A3553"/>
<dbReference type="HOGENOM" id="CLU_016950_7_0_6"/>
<dbReference type="Proteomes" id="UP000008824">
    <property type="component" value="Chromosome"/>
</dbReference>
<dbReference type="GO" id="GO:0005829">
    <property type="term" value="C:cytosol"/>
    <property type="evidence" value="ECO:0007669"/>
    <property type="project" value="TreeGrafter"/>
</dbReference>
<dbReference type="GO" id="GO:0000287">
    <property type="term" value="F:magnesium ion binding"/>
    <property type="evidence" value="ECO:0007669"/>
    <property type="project" value="UniProtKB-UniRule"/>
</dbReference>
<dbReference type="GO" id="GO:0008966">
    <property type="term" value="F:phosphoglucosamine mutase activity"/>
    <property type="evidence" value="ECO:0007669"/>
    <property type="project" value="UniProtKB-UniRule"/>
</dbReference>
<dbReference type="GO" id="GO:0004615">
    <property type="term" value="F:phosphomannomutase activity"/>
    <property type="evidence" value="ECO:0007669"/>
    <property type="project" value="TreeGrafter"/>
</dbReference>
<dbReference type="GO" id="GO:0005975">
    <property type="term" value="P:carbohydrate metabolic process"/>
    <property type="evidence" value="ECO:0007669"/>
    <property type="project" value="InterPro"/>
</dbReference>
<dbReference type="GO" id="GO:0009252">
    <property type="term" value="P:peptidoglycan biosynthetic process"/>
    <property type="evidence" value="ECO:0007669"/>
    <property type="project" value="TreeGrafter"/>
</dbReference>
<dbReference type="GO" id="GO:0006048">
    <property type="term" value="P:UDP-N-acetylglucosamine biosynthetic process"/>
    <property type="evidence" value="ECO:0007669"/>
    <property type="project" value="TreeGrafter"/>
</dbReference>
<dbReference type="CDD" id="cd05802">
    <property type="entry name" value="GlmM"/>
    <property type="match status" value="1"/>
</dbReference>
<dbReference type="FunFam" id="3.30.310.50:FF:000001">
    <property type="entry name" value="Phosphoglucosamine mutase"/>
    <property type="match status" value="1"/>
</dbReference>
<dbReference type="FunFam" id="3.40.120.10:FF:000001">
    <property type="entry name" value="Phosphoglucosamine mutase"/>
    <property type="match status" value="1"/>
</dbReference>
<dbReference type="FunFam" id="3.40.120.10:FF:000002">
    <property type="entry name" value="Phosphoglucosamine mutase"/>
    <property type="match status" value="1"/>
</dbReference>
<dbReference type="Gene3D" id="3.40.120.10">
    <property type="entry name" value="Alpha-D-Glucose-1,6-Bisphosphate, subunit A, domain 3"/>
    <property type="match status" value="3"/>
</dbReference>
<dbReference type="Gene3D" id="3.30.310.50">
    <property type="entry name" value="Alpha-D-phosphohexomutase, C-terminal domain"/>
    <property type="match status" value="1"/>
</dbReference>
<dbReference type="HAMAP" id="MF_01554_B">
    <property type="entry name" value="GlmM_B"/>
    <property type="match status" value="1"/>
</dbReference>
<dbReference type="InterPro" id="IPR005844">
    <property type="entry name" value="A-D-PHexomutase_a/b/a-I"/>
</dbReference>
<dbReference type="InterPro" id="IPR016055">
    <property type="entry name" value="A-D-PHexomutase_a/b/a-I/II/III"/>
</dbReference>
<dbReference type="InterPro" id="IPR005845">
    <property type="entry name" value="A-D-PHexomutase_a/b/a-II"/>
</dbReference>
<dbReference type="InterPro" id="IPR005846">
    <property type="entry name" value="A-D-PHexomutase_a/b/a-III"/>
</dbReference>
<dbReference type="InterPro" id="IPR005843">
    <property type="entry name" value="A-D-PHexomutase_C"/>
</dbReference>
<dbReference type="InterPro" id="IPR036900">
    <property type="entry name" value="A-D-PHexomutase_C_sf"/>
</dbReference>
<dbReference type="InterPro" id="IPR016066">
    <property type="entry name" value="A-D-PHexomutase_CS"/>
</dbReference>
<dbReference type="InterPro" id="IPR005841">
    <property type="entry name" value="Alpha-D-phosphohexomutase_SF"/>
</dbReference>
<dbReference type="InterPro" id="IPR006352">
    <property type="entry name" value="GlmM_bact"/>
</dbReference>
<dbReference type="InterPro" id="IPR050060">
    <property type="entry name" value="Phosphoglucosamine_mutase"/>
</dbReference>
<dbReference type="NCBIfam" id="TIGR01455">
    <property type="entry name" value="glmM"/>
    <property type="match status" value="1"/>
</dbReference>
<dbReference type="NCBIfam" id="NF008139">
    <property type="entry name" value="PRK10887.1"/>
    <property type="match status" value="1"/>
</dbReference>
<dbReference type="PANTHER" id="PTHR42946:SF1">
    <property type="entry name" value="PHOSPHOGLUCOMUTASE (ALPHA-D-GLUCOSE-1,6-BISPHOSPHATE-DEPENDENT)"/>
    <property type="match status" value="1"/>
</dbReference>
<dbReference type="PANTHER" id="PTHR42946">
    <property type="entry name" value="PHOSPHOHEXOSE MUTASE"/>
    <property type="match status" value="1"/>
</dbReference>
<dbReference type="Pfam" id="PF02878">
    <property type="entry name" value="PGM_PMM_I"/>
    <property type="match status" value="1"/>
</dbReference>
<dbReference type="Pfam" id="PF02879">
    <property type="entry name" value="PGM_PMM_II"/>
    <property type="match status" value="1"/>
</dbReference>
<dbReference type="Pfam" id="PF02880">
    <property type="entry name" value="PGM_PMM_III"/>
    <property type="match status" value="1"/>
</dbReference>
<dbReference type="Pfam" id="PF00408">
    <property type="entry name" value="PGM_PMM_IV"/>
    <property type="match status" value="1"/>
</dbReference>
<dbReference type="PRINTS" id="PR00509">
    <property type="entry name" value="PGMPMM"/>
</dbReference>
<dbReference type="SUPFAM" id="SSF55957">
    <property type="entry name" value="Phosphoglucomutase, C-terminal domain"/>
    <property type="match status" value="1"/>
</dbReference>
<dbReference type="SUPFAM" id="SSF53738">
    <property type="entry name" value="Phosphoglucomutase, first 3 domains"/>
    <property type="match status" value="3"/>
</dbReference>
<dbReference type="PROSITE" id="PS00710">
    <property type="entry name" value="PGM_PMM"/>
    <property type="match status" value="1"/>
</dbReference>
<proteinExistence type="inferred from homology"/>
<keyword id="KW-0413">Isomerase</keyword>
<keyword id="KW-0460">Magnesium</keyword>
<keyword id="KW-0479">Metal-binding</keyword>
<keyword id="KW-0597">Phosphoprotein</keyword>
<evidence type="ECO:0000255" key="1">
    <source>
        <dbReference type="HAMAP-Rule" id="MF_01554"/>
    </source>
</evidence>
<sequence>MSNRKYFGTDGIRGRVGNAPITPDFVLKLGWAAGKVLARHGSRKIIIGKDTRISGYMLESALEAGLAAAGLSASFTGPMPTPAVAYLTRTFRAEAGIVISASHNPFYDNGIKFFSIDGTKLPDDVEEAIEAEMEKEITCVDSAELGKASRIVDAAGRYIEFCKGTFPNELSLNGLKVVVDCANGATYHIAPNVLRELGATVIAIGCEPNGVNINEEVGATDVRALQARVLAEKADLGIALDGDGDRVIMVDHEGNKVDGDQIMYIIAREGLRQGQLRGGAVGTLMSNMGLELALKQLGIPFARAKVGDRYVLEKLQEKGWRIGAENSGHVILLDKTTTGDGIVAGLQVLAAMVRNHMSLHDLCSGMKMFPQILVNVRYTAGSGDPLENEAVKAVTADVEATLGNRGRVLLRKSGTEPLIRVMVEGEDEAQVTAFAHRIADAVKAV</sequence>
<gene>
    <name evidence="1" type="primary">glmM</name>
    <name type="ordered locus">SNSL254_A3553</name>
</gene>
<name>GLMM_SALNS</name>